<dbReference type="EMBL" id="FM211192">
    <property type="protein sequence ID" value="CAR72491.1"/>
    <property type="molecule type" value="Genomic_DNA"/>
</dbReference>
<dbReference type="SMR" id="B8ZT53"/>
<dbReference type="KEGG" id="mlb:MLBr02393"/>
<dbReference type="HOGENOM" id="CLU_101379_0_0_11"/>
<dbReference type="Proteomes" id="UP000006900">
    <property type="component" value="Chromosome"/>
</dbReference>
<dbReference type="GO" id="GO:0003677">
    <property type="term" value="F:DNA binding"/>
    <property type="evidence" value="ECO:0007669"/>
    <property type="project" value="UniProtKB-UniRule"/>
</dbReference>
<dbReference type="GO" id="GO:0070063">
    <property type="term" value="F:RNA polymerase binding"/>
    <property type="evidence" value="ECO:0007669"/>
    <property type="project" value="InterPro"/>
</dbReference>
<dbReference type="GO" id="GO:0006354">
    <property type="term" value="P:DNA-templated transcription elongation"/>
    <property type="evidence" value="ECO:0007669"/>
    <property type="project" value="TreeGrafter"/>
</dbReference>
<dbReference type="GO" id="GO:0032784">
    <property type="term" value="P:regulation of DNA-templated transcription elongation"/>
    <property type="evidence" value="ECO:0007669"/>
    <property type="project" value="UniProtKB-UniRule"/>
</dbReference>
<dbReference type="FunFam" id="1.10.287.180:FF:000001">
    <property type="entry name" value="Transcription elongation factor GreA"/>
    <property type="match status" value="1"/>
</dbReference>
<dbReference type="FunFam" id="3.10.50.30:FF:000003">
    <property type="entry name" value="Transcription elongation factor GreA"/>
    <property type="match status" value="1"/>
</dbReference>
<dbReference type="Gene3D" id="3.10.50.30">
    <property type="entry name" value="Transcription elongation factor, GreA/GreB, C-terminal domain"/>
    <property type="match status" value="1"/>
</dbReference>
<dbReference type="Gene3D" id="1.10.287.180">
    <property type="entry name" value="Transcription elongation factor, GreA/GreB, N-terminal domain"/>
    <property type="match status" value="1"/>
</dbReference>
<dbReference type="HAMAP" id="MF_00105">
    <property type="entry name" value="GreA_GreB"/>
    <property type="match status" value="1"/>
</dbReference>
<dbReference type="InterPro" id="IPR036953">
    <property type="entry name" value="GreA/GreB_C_sf"/>
</dbReference>
<dbReference type="InterPro" id="IPR018151">
    <property type="entry name" value="TF_GreA/GreB_CS"/>
</dbReference>
<dbReference type="InterPro" id="IPR006359">
    <property type="entry name" value="Tscrpt_elong_fac_GreA"/>
</dbReference>
<dbReference type="InterPro" id="IPR028624">
    <property type="entry name" value="Tscrpt_elong_fac_GreA/B"/>
</dbReference>
<dbReference type="InterPro" id="IPR001437">
    <property type="entry name" value="Tscrpt_elong_fac_GreA/B_C"/>
</dbReference>
<dbReference type="InterPro" id="IPR023459">
    <property type="entry name" value="Tscrpt_elong_fac_GreA/B_fam"/>
</dbReference>
<dbReference type="InterPro" id="IPR022691">
    <property type="entry name" value="Tscrpt_elong_fac_GreA/B_N"/>
</dbReference>
<dbReference type="InterPro" id="IPR036805">
    <property type="entry name" value="Tscrpt_elong_fac_GreA/B_N_sf"/>
</dbReference>
<dbReference type="NCBIfam" id="TIGR01462">
    <property type="entry name" value="greA"/>
    <property type="match status" value="1"/>
</dbReference>
<dbReference type="NCBIfam" id="NF001262">
    <property type="entry name" value="PRK00226.1-3"/>
    <property type="match status" value="1"/>
</dbReference>
<dbReference type="PANTHER" id="PTHR30437">
    <property type="entry name" value="TRANSCRIPTION ELONGATION FACTOR GREA"/>
    <property type="match status" value="1"/>
</dbReference>
<dbReference type="PANTHER" id="PTHR30437:SF4">
    <property type="entry name" value="TRANSCRIPTION ELONGATION FACTOR GREA"/>
    <property type="match status" value="1"/>
</dbReference>
<dbReference type="Pfam" id="PF01272">
    <property type="entry name" value="GreA_GreB"/>
    <property type="match status" value="1"/>
</dbReference>
<dbReference type="Pfam" id="PF03449">
    <property type="entry name" value="GreA_GreB_N"/>
    <property type="match status" value="1"/>
</dbReference>
<dbReference type="PIRSF" id="PIRSF006092">
    <property type="entry name" value="GreA_GreB"/>
    <property type="match status" value="1"/>
</dbReference>
<dbReference type="SUPFAM" id="SSF54534">
    <property type="entry name" value="FKBP-like"/>
    <property type="match status" value="1"/>
</dbReference>
<dbReference type="SUPFAM" id="SSF46557">
    <property type="entry name" value="GreA transcript cleavage protein, N-terminal domain"/>
    <property type="match status" value="1"/>
</dbReference>
<dbReference type="PROSITE" id="PS00829">
    <property type="entry name" value="GREAB_1"/>
    <property type="match status" value="1"/>
</dbReference>
<dbReference type="PROSITE" id="PS00830">
    <property type="entry name" value="GREAB_2"/>
    <property type="match status" value="1"/>
</dbReference>
<reference key="1">
    <citation type="journal article" date="2009" name="Nat. Genet.">
        <title>Comparative genomic and phylogeographic analysis of Mycobacterium leprae.</title>
        <authorList>
            <person name="Monot M."/>
            <person name="Honore N."/>
            <person name="Garnier T."/>
            <person name="Zidane N."/>
            <person name="Sherafi D."/>
            <person name="Paniz-Mondolfi A."/>
            <person name="Matsuoka M."/>
            <person name="Taylor G.M."/>
            <person name="Donoghue H.D."/>
            <person name="Bouwman A."/>
            <person name="Mays S."/>
            <person name="Watson C."/>
            <person name="Lockwood D."/>
            <person name="Khamispour A."/>
            <person name="Dowlati Y."/>
            <person name="Jianping S."/>
            <person name="Rea T.H."/>
            <person name="Vera-Cabrera L."/>
            <person name="Stefani M.M."/>
            <person name="Banu S."/>
            <person name="Macdonald M."/>
            <person name="Sapkota B.R."/>
            <person name="Spencer J.S."/>
            <person name="Thomas J."/>
            <person name="Harshman K."/>
            <person name="Singh P."/>
            <person name="Busso P."/>
            <person name="Gattiker A."/>
            <person name="Rougemont J."/>
            <person name="Brennan P.J."/>
            <person name="Cole S.T."/>
        </authorList>
    </citation>
    <scope>NUCLEOTIDE SEQUENCE [LARGE SCALE GENOMIC DNA]</scope>
    <source>
        <strain>Br4923</strain>
    </source>
</reference>
<organism>
    <name type="scientific">Mycobacterium leprae (strain Br4923)</name>
    <dbReference type="NCBI Taxonomy" id="561304"/>
    <lineage>
        <taxon>Bacteria</taxon>
        <taxon>Bacillati</taxon>
        <taxon>Actinomycetota</taxon>
        <taxon>Actinomycetes</taxon>
        <taxon>Mycobacteriales</taxon>
        <taxon>Mycobacteriaceae</taxon>
        <taxon>Mycobacterium</taxon>
    </lineage>
</organism>
<gene>
    <name evidence="1" type="primary">greA</name>
    <name type="ordered locus">MLBr02393</name>
</gene>
<feature type="chain" id="PRO_1000190221" description="Transcription elongation factor GreA">
    <location>
        <begin position="1"/>
        <end position="164"/>
    </location>
</feature>
<feature type="coiled-coil region" evidence="1">
    <location>
        <begin position="50"/>
        <end position="75"/>
    </location>
</feature>
<keyword id="KW-0175">Coiled coil</keyword>
<keyword id="KW-0238">DNA-binding</keyword>
<keyword id="KW-0804">Transcription</keyword>
<keyword id="KW-0805">Transcription regulation</keyword>
<proteinExistence type="inferred from homology"/>
<comment type="function">
    <text evidence="1">Necessary for efficient RNA polymerase transcription elongation past template-encoded arresting sites. The arresting sites in DNA have the property of trapping a certain fraction of elongating RNA polymerases that pass through, resulting in locked ternary complexes. Cleavage of the nascent transcript by cleavage factors such as GreA or GreB allows the resumption of elongation from the new 3'terminus. GreA releases sequences of 2 to 3 nucleotides.</text>
</comment>
<comment type="similarity">
    <text evidence="1">Belongs to the GreA/GreB family.</text>
</comment>
<name>GREA_MYCLB</name>
<accession>B8ZT53</accession>
<sequence length="164" mass="18076">MTDTQVTWLTQESHDRLKAELDQLIANRPVIAAEINDRREEGDLRENGGYHAAREEQGQQEARIRQLQDLLNIAKVGEAPKQSGVALPGSVVKVYYNDDKSDTETFLIATRQEGVNEGKLEVYSPNSPLGGALIDAKVGETRSYTVPNGNTVQVTLISAEPYHS</sequence>
<evidence type="ECO:0000255" key="1">
    <source>
        <dbReference type="HAMAP-Rule" id="MF_00105"/>
    </source>
</evidence>
<protein>
    <recommendedName>
        <fullName evidence="1">Transcription elongation factor GreA</fullName>
    </recommendedName>
    <alternativeName>
        <fullName evidence="1">Transcript cleavage factor GreA</fullName>
    </alternativeName>
</protein>